<comment type="catalytic activity">
    <reaction evidence="1">
        <text>(2R)-3-phosphoglycerate + ATP = (2R)-3-phospho-glyceroyl phosphate + ADP</text>
        <dbReference type="Rhea" id="RHEA:14801"/>
        <dbReference type="ChEBI" id="CHEBI:30616"/>
        <dbReference type="ChEBI" id="CHEBI:57604"/>
        <dbReference type="ChEBI" id="CHEBI:58272"/>
        <dbReference type="ChEBI" id="CHEBI:456216"/>
        <dbReference type="EC" id="2.7.2.3"/>
    </reaction>
</comment>
<comment type="pathway">
    <text evidence="1">Carbohydrate degradation; glycolysis; pyruvate from D-glyceraldehyde 3-phosphate: step 2/5.</text>
</comment>
<comment type="subunit">
    <text evidence="1">Monomer.</text>
</comment>
<comment type="subcellular location">
    <subcellularLocation>
        <location evidence="1">Cytoplasm</location>
    </subcellularLocation>
</comment>
<comment type="similarity">
    <text evidence="1">Belongs to the phosphoglycerate kinase family.</text>
</comment>
<gene>
    <name evidence="1" type="primary">pgk</name>
    <name type="ordered locus">SAOUHSC_00796</name>
</gene>
<feature type="chain" id="PRO_1000009649" description="Phosphoglycerate kinase">
    <location>
        <begin position="1"/>
        <end position="396"/>
    </location>
</feature>
<feature type="binding site" evidence="1">
    <location>
        <begin position="21"/>
        <end position="23"/>
    </location>
    <ligand>
        <name>substrate</name>
    </ligand>
</feature>
<feature type="binding site" evidence="1">
    <location>
        <position position="36"/>
    </location>
    <ligand>
        <name>substrate</name>
    </ligand>
</feature>
<feature type="binding site" evidence="1">
    <location>
        <begin position="59"/>
        <end position="62"/>
    </location>
    <ligand>
        <name>substrate</name>
    </ligand>
</feature>
<feature type="binding site" evidence="1">
    <location>
        <position position="119"/>
    </location>
    <ligand>
        <name>substrate</name>
    </ligand>
</feature>
<feature type="binding site" evidence="1">
    <location>
        <position position="156"/>
    </location>
    <ligand>
        <name>substrate</name>
    </ligand>
</feature>
<feature type="binding site" evidence="1">
    <location>
        <position position="206"/>
    </location>
    <ligand>
        <name>ATP</name>
        <dbReference type="ChEBI" id="CHEBI:30616"/>
    </ligand>
</feature>
<feature type="binding site" evidence="1">
    <location>
        <position position="294"/>
    </location>
    <ligand>
        <name>ATP</name>
        <dbReference type="ChEBI" id="CHEBI:30616"/>
    </ligand>
</feature>
<feature type="binding site" evidence="1">
    <location>
        <position position="325"/>
    </location>
    <ligand>
        <name>ATP</name>
        <dbReference type="ChEBI" id="CHEBI:30616"/>
    </ligand>
</feature>
<feature type="binding site" evidence="1">
    <location>
        <begin position="352"/>
        <end position="355"/>
    </location>
    <ligand>
        <name>ATP</name>
        <dbReference type="ChEBI" id="CHEBI:30616"/>
    </ligand>
</feature>
<reference key="1">
    <citation type="book" date="2006" name="Gram positive pathogens, 2nd edition">
        <title>The Staphylococcus aureus NCTC 8325 genome.</title>
        <editorList>
            <person name="Fischetti V."/>
            <person name="Novick R."/>
            <person name="Ferretti J."/>
            <person name="Portnoy D."/>
            <person name="Rood J."/>
        </editorList>
        <authorList>
            <person name="Gillaspy A.F."/>
            <person name="Worrell V."/>
            <person name="Orvis J."/>
            <person name="Roe B.A."/>
            <person name="Dyer D.W."/>
            <person name="Iandolo J.J."/>
        </authorList>
    </citation>
    <scope>NUCLEOTIDE SEQUENCE [LARGE SCALE GENOMIC DNA]</scope>
    <source>
        <strain>NCTC 8325 / PS 47</strain>
    </source>
</reference>
<keyword id="KW-0067">ATP-binding</keyword>
<keyword id="KW-0963">Cytoplasm</keyword>
<keyword id="KW-0324">Glycolysis</keyword>
<keyword id="KW-0418">Kinase</keyword>
<keyword id="KW-0547">Nucleotide-binding</keyword>
<keyword id="KW-1185">Reference proteome</keyword>
<keyword id="KW-0808">Transferase</keyword>
<proteinExistence type="inferred from homology"/>
<accession>Q2G031</accession>
<organism>
    <name type="scientific">Staphylococcus aureus (strain NCTC 8325 / PS 47)</name>
    <dbReference type="NCBI Taxonomy" id="93061"/>
    <lineage>
        <taxon>Bacteria</taxon>
        <taxon>Bacillati</taxon>
        <taxon>Bacillota</taxon>
        <taxon>Bacilli</taxon>
        <taxon>Bacillales</taxon>
        <taxon>Staphylococcaceae</taxon>
        <taxon>Staphylococcus</taxon>
    </lineage>
</organism>
<protein>
    <recommendedName>
        <fullName evidence="1">Phosphoglycerate kinase</fullName>
        <ecNumber evidence="1">2.7.2.3</ecNumber>
    </recommendedName>
</protein>
<dbReference type="EC" id="2.7.2.3" evidence="1"/>
<dbReference type="EMBL" id="CP000253">
    <property type="protein sequence ID" value="ABD29924.1"/>
    <property type="molecule type" value="Genomic_DNA"/>
</dbReference>
<dbReference type="RefSeq" id="WP_001074749.1">
    <property type="nucleotide sequence ID" value="NZ_LS483365.1"/>
</dbReference>
<dbReference type="RefSeq" id="YP_499352.1">
    <property type="nucleotide sequence ID" value="NC_007795.1"/>
</dbReference>
<dbReference type="SMR" id="Q2G031"/>
<dbReference type="STRING" id="93061.SAOUHSC_00796"/>
<dbReference type="PaxDb" id="1280-SAXN108_0841"/>
<dbReference type="GeneID" id="3919359"/>
<dbReference type="KEGG" id="sao:SAOUHSC_00796"/>
<dbReference type="PATRIC" id="fig|93061.5.peg.720"/>
<dbReference type="eggNOG" id="COG0126">
    <property type="taxonomic scope" value="Bacteria"/>
</dbReference>
<dbReference type="HOGENOM" id="CLU_025427_0_2_9"/>
<dbReference type="OrthoDB" id="9808460at2"/>
<dbReference type="UniPathway" id="UPA00109">
    <property type="reaction ID" value="UER00185"/>
</dbReference>
<dbReference type="PRO" id="PR:Q2G031"/>
<dbReference type="Proteomes" id="UP000008816">
    <property type="component" value="Chromosome"/>
</dbReference>
<dbReference type="GO" id="GO:0005829">
    <property type="term" value="C:cytosol"/>
    <property type="evidence" value="ECO:0000318"/>
    <property type="project" value="GO_Central"/>
</dbReference>
<dbReference type="GO" id="GO:0043531">
    <property type="term" value="F:ADP binding"/>
    <property type="evidence" value="ECO:0000318"/>
    <property type="project" value="GO_Central"/>
</dbReference>
<dbReference type="GO" id="GO:0005524">
    <property type="term" value="F:ATP binding"/>
    <property type="evidence" value="ECO:0000318"/>
    <property type="project" value="GO_Central"/>
</dbReference>
<dbReference type="GO" id="GO:0004618">
    <property type="term" value="F:phosphoglycerate kinase activity"/>
    <property type="evidence" value="ECO:0000318"/>
    <property type="project" value="GO_Central"/>
</dbReference>
<dbReference type="GO" id="GO:0006094">
    <property type="term" value="P:gluconeogenesis"/>
    <property type="evidence" value="ECO:0000318"/>
    <property type="project" value="GO_Central"/>
</dbReference>
<dbReference type="GO" id="GO:0006096">
    <property type="term" value="P:glycolytic process"/>
    <property type="evidence" value="ECO:0000318"/>
    <property type="project" value="GO_Central"/>
</dbReference>
<dbReference type="CDD" id="cd00318">
    <property type="entry name" value="Phosphoglycerate_kinase"/>
    <property type="match status" value="1"/>
</dbReference>
<dbReference type="FunFam" id="3.40.50.1260:FF:000001">
    <property type="entry name" value="Phosphoglycerate kinase"/>
    <property type="match status" value="1"/>
</dbReference>
<dbReference type="FunFam" id="3.40.50.1260:FF:000008">
    <property type="entry name" value="Phosphoglycerate kinase"/>
    <property type="match status" value="1"/>
</dbReference>
<dbReference type="Gene3D" id="3.40.50.1260">
    <property type="entry name" value="Phosphoglycerate kinase, N-terminal domain"/>
    <property type="match status" value="2"/>
</dbReference>
<dbReference type="HAMAP" id="MF_00145">
    <property type="entry name" value="Phosphoglyc_kinase"/>
    <property type="match status" value="1"/>
</dbReference>
<dbReference type="InterPro" id="IPR001576">
    <property type="entry name" value="Phosphoglycerate_kinase"/>
</dbReference>
<dbReference type="InterPro" id="IPR015911">
    <property type="entry name" value="Phosphoglycerate_kinase_CS"/>
</dbReference>
<dbReference type="InterPro" id="IPR015824">
    <property type="entry name" value="Phosphoglycerate_kinase_N"/>
</dbReference>
<dbReference type="InterPro" id="IPR036043">
    <property type="entry name" value="Phosphoglycerate_kinase_sf"/>
</dbReference>
<dbReference type="PANTHER" id="PTHR11406">
    <property type="entry name" value="PHOSPHOGLYCERATE KINASE"/>
    <property type="match status" value="1"/>
</dbReference>
<dbReference type="PANTHER" id="PTHR11406:SF23">
    <property type="entry name" value="PHOSPHOGLYCERATE KINASE 1, CHLOROPLASTIC-RELATED"/>
    <property type="match status" value="1"/>
</dbReference>
<dbReference type="Pfam" id="PF00162">
    <property type="entry name" value="PGK"/>
    <property type="match status" value="1"/>
</dbReference>
<dbReference type="PIRSF" id="PIRSF000724">
    <property type="entry name" value="Pgk"/>
    <property type="match status" value="1"/>
</dbReference>
<dbReference type="PRINTS" id="PR00477">
    <property type="entry name" value="PHGLYCKINASE"/>
</dbReference>
<dbReference type="SUPFAM" id="SSF53748">
    <property type="entry name" value="Phosphoglycerate kinase"/>
    <property type="match status" value="1"/>
</dbReference>
<dbReference type="PROSITE" id="PS00111">
    <property type="entry name" value="PGLYCERATE_KINASE"/>
    <property type="match status" value="1"/>
</dbReference>
<name>PGK_STAA8</name>
<evidence type="ECO:0000255" key="1">
    <source>
        <dbReference type="HAMAP-Rule" id="MF_00145"/>
    </source>
</evidence>
<sequence length="396" mass="42602">MAKKIVSDLDLKGKTVLVRADFNVPLKDGEITNDNRIVQALPTIQYIIEQGGKIVLFSHLGKVKEESDKAKLTLRPVAEDLSKKLDKEVVFVPETRGEKLEAAIKDLKEGDVLLVENTRYEDLDGKKESKNDPELGKYWASLGDVFVNDAFGTAHREHASNVGISTHLETAAGFLMDKEIKFIGGVVNDPHKPVVAILGGAKVSDKINVIKNLVNIADKIIIGGGMAYTFLKAQGKEIGISLLEEDKIDFAKDLLEKHGDKIVLPVDTKVAKEFSNDAKITVVPSDSIPADQEGMDIGPNTVKLFADELEGAHTVVWNGPMGVFEFSNFAQGTIGVCKAIANLKDAITIIGGGDSAAAAISLGFENDFTHISTGGGASLEYLEGKELPGIKAINNK</sequence>